<sequence length="196" mass="21295">MKVVILDTGCANLSSVTYAVQRLGYTPVVSREAEIVLQADKLFLPGVGTAQAAMNQLEERDLIALIKACTQPVLGICLGMQLLGTHSDESGGIPTLGIVDTPVKKMIDHGLPLPHMGWNQVIPKAGHRLFRDIDDGAYFYFVHSYAMPVCENTIAQANYGEAFTAALEKDNFFGVQFHPERSGAAGAQLLKNFLEM</sequence>
<feature type="chain" id="PRO_0000152376" description="Imidazole glycerol phosphate synthase subunit HisH">
    <location>
        <begin position="1"/>
        <end position="196"/>
    </location>
</feature>
<feature type="domain" description="Glutamine amidotransferase type-1" evidence="1">
    <location>
        <begin position="2"/>
        <end position="196"/>
    </location>
</feature>
<feature type="active site" description="Nucleophile" evidence="1">
    <location>
        <position position="77"/>
    </location>
</feature>
<feature type="active site" evidence="1">
    <location>
        <position position="178"/>
    </location>
</feature>
<feature type="active site" evidence="1">
    <location>
        <position position="180"/>
    </location>
</feature>
<accession>Q6D408</accession>
<proteinExistence type="inferred from homology"/>
<name>HIS5_PECAS</name>
<keyword id="KW-0028">Amino-acid biosynthesis</keyword>
<keyword id="KW-0963">Cytoplasm</keyword>
<keyword id="KW-0315">Glutamine amidotransferase</keyword>
<keyword id="KW-0368">Histidine biosynthesis</keyword>
<keyword id="KW-0378">Hydrolase</keyword>
<keyword id="KW-0456">Lyase</keyword>
<keyword id="KW-1185">Reference proteome</keyword>
<reference key="1">
    <citation type="journal article" date="2004" name="Proc. Natl. Acad. Sci. U.S.A.">
        <title>Genome sequence of the enterobacterial phytopathogen Erwinia carotovora subsp. atroseptica and characterization of virulence factors.</title>
        <authorList>
            <person name="Bell K.S."/>
            <person name="Sebaihia M."/>
            <person name="Pritchard L."/>
            <person name="Holden M.T.G."/>
            <person name="Hyman L.J."/>
            <person name="Holeva M.C."/>
            <person name="Thomson N.R."/>
            <person name="Bentley S.D."/>
            <person name="Churcher L.J.C."/>
            <person name="Mungall K."/>
            <person name="Atkin R."/>
            <person name="Bason N."/>
            <person name="Brooks K."/>
            <person name="Chillingworth T."/>
            <person name="Clark K."/>
            <person name="Doggett J."/>
            <person name="Fraser A."/>
            <person name="Hance Z."/>
            <person name="Hauser H."/>
            <person name="Jagels K."/>
            <person name="Moule S."/>
            <person name="Norbertczak H."/>
            <person name="Ormond D."/>
            <person name="Price C."/>
            <person name="Quail M.A."/>
            <person name="Sanders M."/>
            <person name="Walker D."/>
            <person name="Whitehead S."/>
            <person name="Salmond G.P.C."/>
            <person name="Birch P.R.J."/>
            <person name="Parkhill J."/>
            <person name="Toth I.K."/>
        </authorList>
    </citation>
    <scope>NUCLEOTIDE SEQUENCE [LARGE SCALE GENOMIC DNA]</scope>
    <source>
        <strain>SCRI 1043 / ATCC BAA-672</strain>
    </source>
</reference>
<dbReference type="EC" id="4.3.2.10" evidence="1"/>
<dbReference type="EC" id="3.5.1.2" evidence="1"/>
<dbReference type="EMBL" id="BX950851">
    <property type="protein sequence ID" value="CAG75485.1"/>
    <property type="molecule type" value="Genomic_DNA"/>
</dbReference>
<dbReference type="RefSeq" id="WP_011094131.1">
    <property type="nucleotide sequence ID" value="NC_004547.2"/>
</dbReference>
<dbReference type="SMR" id="Q6D408"/>
<dbReference type="STRING" id="218491.ECA2586"/>
<dbReference type="KEGG" id="eca:ECA2586"/>
<dbReference type="PATRIC" id="fig|218491.5.peg.2620"/>
<dbReference type="eggNOG" id="COG0118">
    <property type="taxonomic scope" value="Bacteria"/>
</dbReference>
<dbReference type="HOGENOM" id="CLU_071837_0_0_6"/>
<dbReference type="OrthoDB" id="9807137at2"/>
<dbReference type="UniPathway" id="UPA00031">
    <property type="reaction ID" value="UER00010"/>
</dbReference>
<dbReference type="Proteomes" id="UP000007966">
    <property type="component" value="Chromosome"/>
</dbReference>
<dbReference type="GO" id="GO:0005737">
    <property type="term" value="C:cytoplasm"/>
    <property type="evidence" value="ECO:0007669"/>
    <property type="project" value="UniProtKB-SubCell"/>
</dbReference>
<dbReference type="GO" id="GO:0004359">
    <property type="term" value="F:glutaminase activity"/>
    <property type="evidence" value="ECO:0007669"/>
    <property type="project" value="UniProtKB-EC"/>
</dbReference>
<dbReference type="GO" id="GO:0000107">
    <property type="term" value="F:imidazoleglycerol-phosphate synthase activity"/>
    <property type="evidence" value="ECO:0007669"/>
    <property type="project" value="UniProtKB-UniRule"/>
</dbReference>
<dbReference type="GO" id="GO:0016829">
    <property type="term" value="F:lyase activity"/>
    <property type="evidence" value="ECO:0007669"/>
    <property type="project" value="UniProtKB-KW"/>
</dbReference>
<dbReference type="GO" id="GO:0000105">
    <property type="term" value="P:L-histidine biosynthetic process"/>
    <property type="evidence" value="ECO:0007669"/>
    <property type="project" value="UniProtKB-UniRule"/>
</dbReference>
<dbReference type="CDD" id="cd01748">
    <property type="entry name" value="GATase1_IGP_Synthase"/>
    <property type="match status" value="1"/>
</dbReference>
<dbReference type="FunFam" id="3.40.50.880:FF:000009">
    <property type="entry name" value="Imidazole glycerol phosphate synthase subunit HisH"/>
    <property type="match status" value="1"/>
</dbReference>
<dbReference type="Gene3D" id="3.40.50.880">
    <property type="match status" value="1"/>
</dbReference>
<dbReference type="HAMAP" id="MF_00278">
    <property type="entry name" value="HisH"/>
    <property type="match status" value="1"/>
</dbReference>
<dbReference type="InterPro" id="IPR029062">
    <property type="entry name" value="Class_I_gatase-like"/>
</dbReference>
<dbReference type="InterPro" id="IPR017926">
    <property type="entry name" value="GATASE"/>
</dbReference>
<dbReference type="InterPro" id="IPR010139">
    <property type="entry name" value="Imidazole-glycPsynth_HisH"/>
</dbReference>
<dbReference type="NCBIfam" id="TIGR01855">
    <property type="entry name" value="IMP_synth_hisH"/>
    <property type="match status" value="1"/>
</dbReference>
<dbReference type="PANTHER" id="PTHR42701">
    <property type="entry name" value="IMIDAZOLE GLYCEROL PHOSPHATE SYNTHASE SUBUNIT HISH"/>
    <property type="match status" value="1"/>
</dbReference>
<dbReference type="PANTHER" id="PTHR42701:SF1">
    <property type="entry name" value="IMIDAZOLE GLYCEROL PHOSPHATE SYNTHASE SUBUNIT HISH"/>
    <property type="match status" value="1"/>
</dbReference>
<dbReference type="Pfam" id="PF00117">
    <property type="entry name" value="GATase"/>
    <property type="match status" value="1"/>
</dbReference>
<dbReference type="PIRSF" id="PIRSF000495">
    <property type="entry name" value="Amidotransf_hisH"/>
    <property type="match status" value="1"/>
</dbReference>
<dbReference type="PRINTS" id="PR00096">
    <property type="entry name" value="GATASE"/>
</dbReference>
<dbReference type="SUPFAM" id="SSF52317">
    <property type="entry name" value="Class I glutamine amidotransferase-like"/>
    <property type="match status" value="1"/>
</dbReference>
<dbReference type="PROSITE" id="PS51273">
    <property type="entry name" value="GATASE_TYPE_1"/>
    <property type="match status" value="1"/>
</dbReference>
<gene>
    <name evidence="1" type="primary">hisH</name>
    <name type="ordered locus">ECA2586</name>
</gene>
<evidence type="ECO:0000255" key="1">
    <source>
        <dbReference type="HAMAP-Rule" id="MF_00278"/>
    </source>
</evidence>
<protein>
    <recommendedName>
        <fullName evidence="1">Imidazole glycerol phosphate synthase subunit HisH</fullName>
        <ecNumber evidence="1">4.3.2.10</ecNumber>
    </recommendedName>
    <alternativeName>
        <fullName evidence="1">IGP synthase glutaminase subunit</fullName>
        <ecNumber evidence="1">3.5.1.2</ecNumber>
    </alternativeName>
    <alternativeName>
        <fullName evidence="1">IGP synthase subunit HisH</fullName>
    </alternativeName>
    <alternativeName>
        <fullName evidence="1">ImGP synthase subunit HisH</fullName>
        <shortName evidence="1">IGPS subunit HisH</shortName>
    </alternativeName>
</protein>
<organism>
    <name type="scientific">Pectobacterium atrosepticum (strain SCRI 1043 / ATCC BAA-672)</name>
    <name type="common">Erwinia carotovora subsp. atroseptica</name>
    <dbReference type="NCBI Taxonomy" id="218491"/>
    <lineage>
        <taxon>Bacteria</taxon>
        <taxon>Pseudomonadati</taxon>
        <taxon>Pseudomonadota</taxon>
        <taxon>Gammaproteobacteria</taxon>
        <taxon>Enterobacterales</taxon>
        <taxon>Pectobacteriaceae</taxon>
        <taxon>Pectobacterium</taxon>
    </lineage>
</organism>
<comment type="function">
    <text evidence="1">IGPS catalyzes the conversion of PRFAR and glutamine to IGP, AICAR and glutamate. The HisH subunit catalyzes the hydrolysis of glutamine to glutamate and ammonia as part of the synthesis of IGP and AICAR. The resulting ammonia molecule is channeled to the active site of HisF.</text>
</comment>
<comment type="catalytic activity">
    <reaction evidence="1">
        <text>5-[(5-phospho-1-deoxy-D-ribulos-1-ylimino)methylamino]-1-(5-phospho-beta-D-ribosyl)imidazole-4-carboxamide + L-glutamine = D-erythro-1-(imidazol-4-yl)glycerol 3-phosphate + 5-amino-1-(5-phospho-beta-D-ribosyl)imidazole-4-carboxamide + L-glutamate + H(+)</text>
        <dbReference type="Rhea" id="RHEA:24793"/>
        <dbReference type="ChEBI" id="CHEBI:15378"/>
        <dbReference type="ChEBI" id="CHEBI:29985"/>
        <dbReference type="ChEBI" id="CHEBI:58278"/>
        <dbReference type="ChEBI" id="CHEBI:58359"/>
        <dbReference type="ChEBI" id="CHEBI:58475"/>
        <dbReference type="ChEBI" id="CHEBI:58525"/>
        <dbReference type="EC" id="4.3.2.10"/>
    </reaction>
</comment>
<comment type="catalytic activity">
    <reaction evidence="1">
        <text>L-glutamine + H2O = L-glutamate + NH4(+)</text>
        <dbReference type="Rhea" id="RHEA:15889"/>
        <dbReference type="ChEBI" id="CHEBI:15377"/>
        <dbReference type="ChEBI" id="CHEBI:28938"/>
        <dbReference type="ChEBI" id="CHEBI:29985"/>
        <dbReference type="ChEBI" id="CHEBI:58359"/>
        <dbReference type="EC" id="3.5.1.2"/>
    </reaction>
</comment>
<comment type="pathway">
    <text evidence="1">Amino-acid biosynthesis; L-histidine biosynthesis; L-histidine from 5-phospho-alpha-D-ribose 1-diphosphate: step 5/9.</text>
</comment>
<comment type="subunit">
    <text evidence="1">Heterodimer of HisH and HisF.</text>
</comment>
<comment type="subcellular location">
    <subcellularLocation>
        <location evidence="1">Cytoplasm</location>
    </subcellularLocation>
</comment>